<name>RNH_RICCN</name>
<reference key="1">
    <citation type="journal article" date="2001" name="Science">
        <title>Mechanisms of evolution in Rickettsia conorii and R. prowazekii.</title>
        <authorList>
            <person name="Ogata H."/>
            <person name="Audic S."/>
            <person name="Renesto-Audiffren P."/>
            <person name="Fournier P.-E."/>
            <person name="Barbe V."/>
            <person name="Samson D."/>
            <person name="Roux V."/>
            <person name="Cossart P."/>
            <person name="Weissenbach J."/>
            <person name="Claverie J.-M."/>
            <person name="Raoult D."/>
        </authorList>
    </citation>
    <scope>NUCLEOTIDE SEQUENCE [LARGE SCALE GENOMIC DNA]</scope>
    <source>
        <strain>ATCC VR-613 / Malish 7</strain>
    </source>
</reference>
<proteinExistence type="inferred from homology"/>
<protein>
    <recommendedName>
        <fullName evidence="1">Ribonuclease HI</fullName>
        <shortName evidence="1">RNase HI</shortName>
        <ecNumber evidence="1">3.1.26.4</ecNumber>
    </recommendedName>
</protein>
<gene>
    <name evidence="1" type="primary">rnhA</name>
    <name type="ordered locus">RC1108</name>
</gene>
<organism>
    <name type="scientific">Rickettsia conorii (strain ATCC VR-613 / Malish 7)</name>
    <dbReference type="NCBI Taxonomy" id="272944"/>
    <lineage>
        <taxon>Bacteria</taxon>
        <taxon>Pseudomonadati</taxon>
        <taxon>Pseudomonadota</taxon>
        <taxon>Alphaproteobacteria</taxon>
        <taxon>Rickettsiales</taxon>
        <taxon>Rickettsiaceae</taxon>
        <taxon>Rickettsieae</taxon>
        <taxon>Rickettsia</taxon>
        <taxon>spotted fever group</taxon>
    </lineage>
</organism>
<comment type="function">
    <text evidence="1">Endonuclease that specifically degrades the RNA of RNA-DNA hybrids.</text>
</comment>
<comment type="catalytic activity">
    <reaction evidence="1">
        <text>Endonucleolytic cleavage to 5'-phosphomonoester.</text>
        <dbReference type="EC" id="3.1.26.4"/>
    </reaction>
</comment>
<comment type="cofactor">
    <cofactor evidence="1">
        <name>Mg(2+)</name>
        <dbReference type="ChEBI" id="CHEBI:18420"/>
    </cofactor>
    <text evidence="1">Binds 1 Mg(2+) ion per subunit. May bind a second metal ion at a regulatory site, or after substrate binding.</text>
</comment>
<comment type="subunit">
    <text evidence="1">Monomer.</text>
</comment>
<comment type="subcellular location">
    <subcellularLocation>
        <location evidence="1">Cytoplasm</location>
    </subcellularLocation>
</comment>
<comment type="similarity">
    <text evidence="1">Belongs to the RNase H family.</text>
</comment>
<comment type="sequence caution" evidence="3">
    <conflict type="erroneous initiation">
        <sequence resource="EMBL-CDS" id="AAL03646"/>
    </conflict>
</comment>
<sequence length="152" mass="17057">MDSKVVIYTDGACAGNPGPGGWGALLQFNDTSKEVFGYELDTTNNRMEITAALEALRILKKSCNIEIYTDSKYLQQGITAWIHNWIKNNWCKSNNEPVKNADLWQKLYAELSKHTIIWKWVKGHANNSGNIAADKLAVQGRETAIEILKCRG</sequence>
<dbReference type="EC" id="3.1.26.4" evidence="1"/>
<dbReference type="EMBL" id="AE006914">
    <property type="protein sequence ID" value="AAL03646.1"/>
    <property type="status" value="ALT_INIT"/>
    <property type="molecule type" value="Genomic_DNA"/>
</dbReference>
<dbReference type="PIR" id="D97838">
    <property type="entry name" value="D97838"/>
</dbReference>
<dbReference type="SMR" id="Q92GL5"/>
<dbReference type="KEGG" id="rco:RC1108"/>
<dbReference type="HOGENOM" id="CLU_030894_6_0_5"/>
<dbReference type="Proteomes" id="UP000000816">
    <property type="component" value="Chromosome"/>
</dbReference>
<dbReference type="GO" id="GO:0005737">
    <property type="term" value="C:cytoplasm"/>
    <property type="evidence" value="ECO:0007669"/>
    <property type="project" value="UniProtKB-SubCell"/>
</dbReference>
<dbReference type="GO" id="GO:0000287">
    <property type="term" value="F:magnesium ion binding"/>
    <property type="evidence" value="ECO:0007669"/>
    <property type="project" value="UniProtKB-UniRule"/>
</dbReference>
<dbReference type="GO" id="GO:0003676">
    <property type="term" value="F:nucleic acid binding"/>
    <property type="evidence" value="ECO:0007669"/>
    <property type="project" value="InterPro"/>
</dbReference>
<dbReference type="GO" id="GO:0004523">
    <property type="term" value="F:RNA-DNA hybrid ribonuclease activity"/>
    <property type="evidence" value="ECO:0007669"/>
    <property type="project" value="UniProtKB-UniRule"/>
</dbReference>
<dbReference type="GO" id="GO:0043137">
    <property type="term" value="P:DNA replication, removal of RNA primer"/>
    <property type="evidence" value="ECO:0007669"/>
    <property type="project" value="TreeGrafter"/>
</dbReference>
<dbReference type="CDD" id="cd09278">
    <property type="entry name" value="RNase_HI_prokaryote_like"/>
    <property type="match status" value="1"/>
</dbReference>
<dbReference type="FunFam" id="3.30.420.10:FF:000089">
    <property type="entry name" value="Ribonuclease H"/>
    <property type="match status" value="1"/>
</dbReference>
<dbReference type="Gene3D" id="3.30.420.10">
    <property type="entry name" value="Ribonuclease H-like superfamily/Ribonuclease H"/>
    <property type="match status" value="1"/>
</dbReference>
<dbReference type="HAMAP" id="MF_00042">
    <property type="entry name" value="RNase_H"/>
    <property type="match status" value="1"/>
</dbReference>
<dbReference type="InterPro" id="IPR050092">
    <property type="entry name" value="RNase_H"/>
</dbReference>
<dbReference type="InterPro" id="IPR012337">
    <property type="entry name" value="RNaseH-like_sf"/>
</dbReference>
<dbReference type="InterPro" id="IPR002156">
    <property type="entry name" value="RNaseH_domain"/>
</dbReference>
<dbReference type="InterPro" id="IPR036397">
    <property type="entry name" value="RNaseH_sf"/>
</dbReference>
<dbReference type="InterPro" id="IPR022892">
    <property type="entry name" value="RNaseHI"/>
</dbReference>
<dbReference type="NCBIfam" id="NF001236">
    <property type="entry name" value="PRK00203.1"/>
    <property type="match status" value="1"/>
</dbReference>
<dbReference type="PANTHER" id="PTHR10642">
    <property type="entry name" value="RIBONUCLEASE H1"/>
    <property type="match status" value="1"/>
</dbReference>
<dbReference type="PANTHER" id="PTHR10642:SF26">
    <property type="entry name" value="RIBONUCLEASE H1"/>
    <property type="match status" value="1"/>
</dbReference>
<dbReference type="Pfam" id="PF00075">
    <property type="entry name" value="RNase_H"/>
    <property type="match status" value="1"/>
</dbReference>
<dbReference type="SUPFAM" id="SSF53098">
    <property type="entry name" value="Ribonuclease H-like"/>
    <property type="match status" value="1"/>
</dbReference>
<dbReference type="PROSITE" id="PS50879">
    <property type="entry name" value="RNASE_H_1"/>
    <property type="match status" value="1"/>
</dbReference>
<evidence type="ECO:0000255" key="1">
    <source>
        <dbReference type="HAMAP-Rule" id="MF_00042"/>
    </source>
</evidence>
<evidence type="ECO:0000255" key="2">
    <source>
        <dbReference type="PROSITE-ProRule" id="PRU00408"/>
    </source>
</evidence>
<evidence type="ECO:0000305" key="3"/>
<accession>Q92GL5</accession>
<keyword id="KW-0963">Cytoplasm</keyword>
<keyword id="KW-0255">Endonuclease</keyword>
<keyword id="KW-0378">Hydrolase</keyword>
<keyword id="KW-0460">Magnesium</keyword>
<keyword id="KW-0479">Metal-binding</keyword>
<keyword id="KW-0540">Nuclease</keyword>
<feature type="chain" id="PRO_0000195396" description="Ribonuclease HI">
    <location>
        <begin position="1"/>
        <end position="152"/>
    </location>
</feature>
<feature type="domain" description="RNase H type-1" evidence="2">
    <location>
        <begin position="1"/>
        <end position="142"/>
    </location>
</feature>
<feature type="binding site" evidence="1">
    <location>
        <position position="10"/>
    </location>
    <ligand>
        <name>Mg(2+)</name>
        <dbReference type="ChEBI" id="CHEBI:18420"/>
        <label>1</label>
    </ligand>
</feature>
<feature type="binding site" evidence="1">
    <location>
        <position position="10"/>
    </location>
    <ligand>
        <name>Mg(2+)</name>
        <dbReference type="ChEBI" id="CHEBI:18420"/>
        <label>2</label>
    </ligand>
</feature>
<feature type="binding site" evidence="1">
    <location>
        <position position="48"/>
    </location>
    <ligand>
        <name>Mg(2+)</name>
        <dbReference type="ChEBI" id="CHEBI:18420"/>
        <label>1</label>
    </ligand>
</feature>
<feature type="binding site" evidence="1">
    <location>
        <position position="70"/>
    </location>
    <ligand>
        <name>Mg(2+)</name>
        <dbReference type="ChEBI" id="CHEBI:18420"/>
        <label>1</label>
    </ligand>
</feature>
<feature type="binding site" evidence="1">
    <location>
        <position position="134"/>
    </location>
    <ligand>
        <name>Mg(2+)</name>
        <dbReference type="ChEBI" id="CHEBI:18420"/>
        <label>2</label>
    </ligand>
</feature>